<organism>
    <name type="scientific">Burkholderia multivorans (strain ATCC 17616 / 249)</name>
    <dbReference type="NCBI Taxonomy" id="395019"/>
    <lineage>
        <taxon>Bacteria</taxon>
        <taxon>Pseudomonadati</taxon>
        <taxon>Pseudomonadota</taxon>
        <taxon>Betaproteobacteria</taxon>
        <taxon>Burkholderiales</taxon>
        <taxon>Burkholderiaceae</taxon>
        <taxon>Burkholderia</taxon>
        <taxon>Burkholderia cepacia complex</taxon>
    </lineage>
</organism>
<keyword id="KW-1185">Reference proteome</keyword>
<keyword id="KW-0687">Ribonucleoprotein</keyword>
<keyword id="KW-0689">Ribosomal protein</keyword>
<keyword id="KW-0694">RNA-binding</keyword>
<keyword id="KW-0699">rRNA-binding</keyword>
<evidence type="ECO:0000255" key="1">
    <source>
        <dbReference type="HAMAP-Rule" id="MF_01310"/>
    </source>
</evidence>
<evidence type="ECO:0000305" key="2"/>
<dbReference type="EMBL" id="CP000868">
    <property type="protein sequence ID" value="ABX13968.1"/>
    <property type="molecule type" value="Genomic_DNA"/>
</dbReference>
<dbReference type="EMBL" id="AP009385">
    <property type="protein sequence ID" value="BAG44866.1"/>
    <property type="molecule type" value="Genomic_DNA"/>
</dbReference>
<dbReference type="RefSeq" id="WP_004197937.1">
    <property type="nucleotide sequence ID" value="NC_010804.1"/>
</dbReference>
<dbReference type="SMR" id="A9ADL7"/>
<dbReference type="STRING" id="395019.BMULJ_02981"/>
<dbReference type="GeneID" id="98107136"/>
<dbReference type="KEGG" id="bmj:BMULJ_02981"/>
<dbReference type="KEGG" id="bmu:Bmul_0273"/>
<dbReference type="eggNOG" id="COG0100">
    <property type="taxonomic scope" value="Bacteria"/>
</dbReference>
<dbReference type="HOGENOM" id="CLU_072439_5_0_4"/>
<dbReference type="Proteomes" id="UP000008815">
    <property type="component" value="Chromosome 1"/>
</dbReference>
<dbReference type="GO" id="GO:1990904">
    <property type="term" value="C:ribonucleoprotein complex"/>
    <property type="evidence" value="ECO:0007669"/>
    <property type="project" value="UniProtKB-KW"/>
</dbReference>
<dbReference type="GO" id="GO:0005840">
    <property type="term" value="C:ribosome"/>
    <property type="evidence" value="ECO:0007669"/>
    <property type="project" value="UniProtKB-KW"/>
</dbReference>
<dbReference type="GO" id="GO:0019843">
    <property type="term" value="F:rRNA binding"/>
    <property type="evidence" value="ECO:0007669"/>
    <property type="project" value="UniProtKB-UniRule"/>
</dbReference>
<dbReference type="GO" id="GO:0003735">
    <property type="term" value="F:structural constituent of ribosome"/>
    <property type="evidence" value="ECO:0007669"/>
    <property type="project" value="InterPro"/>
</dbReference>
<dbReference type="GO" id="GO:0006412">
    <property type="term" value="P:translation"/>
    <property type="evidence" value="ECO:0007669"/>
    <property type="project" value="UniProtKB-UniRule"/>
</dbReference>
<dbReference type="FunFam" id="3.30.420.80:FF:000001">
    <property type="entry name" value="30S ribosomal protein S11"/>
    <property type="match status" value="1"/>
</dbReference>
<dbReference type="Gene3D" id="3.30.420.80">
    <property type="entry name" value="Ribosomal protein S11"/>
    <property type="match status" value="1"/>
</dbReference>
<dbReference type="HAMAP" id="MF_01310">
    <property type="entry name" value="Ribosomal_uS11"/>
    <property type="match status" value="1"/>
</dbReference>
<dbReference type="InterPro" id="IPR001971">
    <property type="entry name" value="Ribosomal_uS11"/>
</dbReference>
<dbReference type="InterPro" id="IPR019981">
    <property type="entry name" value="Ribosomal_uS11_bac-type"/>
</dbReference>
<dbReference type="InterPro" id="IPR018102">
    <property type="entry name" value="Ribosomal_uS11_CS"/>
</dbReference>
<dbReference type="InterPro" id="IPR036967">
    <property type="entry name" value="Ribosomal_uS11_sf"/>
</dbReference>
<dbReference type="NCBIfam" id="NF003698">
    <property type="entry name" value="PRK05309.1"/>
    <property type="match status" value="1"/>
</dbReference>
<dbReference type="NCBIfam" id="TIGR03632">
    <property type="entry name" value="uS11_bact"/>
    <property type="match status" value="1"/>
</dbReference>
<dbReference type="PANTHER" id="PTHR11759">
    <property type="entry name" value="40S RIBOSOMAL PROTEIN S14/30S RIBOSOMAL PROTEIN S11"/>
    <property type="match status" value="1"/>
</dbReference>
<dbReference type="Pfam" id="PF00411">
    <property type="entry name" value="Ribosomal_S11"/>
    <property type="match status" value="1"/>
</dbReference>
<dbReference type="PIRSF" id="PIRSF002131">
    <property type="entry name" value="Ribosomal_S11"/>
    <property type="match status" value="1"/>
</dbReference>
<dbReference type="SUPFAM" id="SSF53137">
    <property type="entry name" value="Translational machinery components"/>
    <property type="match status" value="1"/>
</dbReference>
<dbReference type="PROSITE" id="PS00054">
    <property type="entry name" value="RIBOSOMAL_S11"/>
    <property type="match status" value="1"/>
</dbReference>
<proteinExistence type="inferred from homology"/>
<reference key="1">
    <citation type="submission" date="2007-10" db="EMBL/GenBank/DDBJ databases">
        <title>Complete sequence of chromosome 1 of Burkholderia multivorans ATCC 17616.</title>
        <authorList>
            <person name="Copeland A."/>
            <person name="Lucas S."/>
            <person name="Lapidus A."/>
            <person name="Barry K."/>
            <person name="Glavina del Rio T."/>
            <person name="Dalin E."/>
            <person name="Tice H."/>
            <person name="Pitluck S."/>
            <person name="Chain P."/>
            <person name="Malfatti S."/>
            <person name="Shin M."/>
            <person name="Vergez L."/>
            <person name="Schmutz J."/>
            <person name="Larimer F."/>
            <person name="Land M."/>
            <person name="Hauser L."/>
            <person name="Kyrpides N."/>
            <person name="Kim E."/>
            <person name="Tiedje J."/>
            <person name="Richardson P."/>
        </authorList>
    </citation>
    <scope>NUCLEOTIDE SEQUENCE [LARGE SCALE GENOMIC DNA]</scope>
    <source>
        <strain>ATCC 17616 / 249</strain>
    </source>
</reference>
<reference key="2">
    <citation type="submission" date="2007-04" db="EMBL/GenBank/DDBJ databases">
        <title>Complete genome sequence of Burkholderia multivorans ATCC 17616.</title>
        <authorList>
            <person name="Ohtsubo Y."/>
            <person name="Yamashita A."/>
            <person name="Kurokawa K."/>
            <person name="Takami H."/>
            <person name="Yuhara S."/>
            <person name="Nishiyama E."/>
            <person name="Endo R."/>
            <person name="Miyazaki R."/>
            <person name="Ono A."/>
            <person name="Yano K."/>
            <person name="Ito M."/>
            <person name="Sota M."/>
            <person name="Yuji N."/>
            <person name="Hattori M."/>
            <person name="Tsuda M."/>
        </authorList>
    </citation>
    <scope>NUCLEOTIDE SEQUENCE [LARGE SCALE GENOMIC DNA]</scope>
    <source>
        <strain>ATCC 17616 / 249</strain>
    </source>
</reference>
<feature type="chain" id="PRO_1000141064" description="Small ribosomal subunit protein uS11">
    <location>
        <begin position="1"/>
        <end position="133"/>
    </location>
</feature>
<comment type="function">
    <text evidence="1">Located on the platform of the 30S subunit, it bridges several disparate RNA helices of the 16S rRNA. Forms part of the Shine-Dalgarno cleft in the 70S ribosome.</text>
</comment>
<comment type="subunit">
    <text evidence="1">Part of the 30S ribosomal subunit. Interacts with proteins S7 and S18. Binds to IF-3.</text>
</comment>
<comment type="similarity">
    <text evidence="1">Belongs to the universal ribosomal protein uS11 family.</text>
</comment>
<accession>A9ADL7</accession>
<protein>
    <recommendedName>
        <fullName evidence="1">Small ribosomal subunit protein uS11</fullName>
    </recommendedName>
    <alternativeName>
        <fullName evidence="2">30S ribosomal protein S11</fullName>
    </alternativeName>
</protein>
<name>RS11_BURM1</name>
<sequence length="133" mass="14118">MAKASNTAAQRVRKKVKKNVAEGVVHVHASFNNTIITITDRQGNALAWATSGGQGFKGSRKSTPFAAQVAAESAGRVAMEYGVKNLEVRIKGPGPGRESAVRALHGLGIKITAISDVTPIPHNGCRPPKRRRI</sequence>
<gene>
    <name evidence="1" type="primary">rpsK</name>
    <name type="ordered locus">Bmul_0273</name>
    <name type="ordered locus">BMULJ_02981</name>
</gene>